<comment type="function">
    <text evidence="1">Protein S19 forms a complex with S13 that binds strongly to the 16S ribosomal RNA.</text>
</comment>
<comment type="similarity">
    <text evidence="1">Belongs to the universal ribosomal protein uS19 family.</text>
</comment>
<gene>
    <name evidence="1" type="primary">rpsS</name>
    <name type="ordered locus">Rsph17025_2530</name>
</gene>
<accession>A4WVK4</accession>
<dbReference type="EMBL" id="CP000661">
    <property type="protein sequence ID" value="ABP71418.1"/>
    <property type="molecule type" value="Genomic_DNA"/>
</dbReference>
<dbReference type="SMR" id="A4WVK4"/>
<dbReference type="STRING" id="349102.Rsph17025_2530"/>
<dbReference type="KEGG" id="rsq:Rsph17025_2530"/>
<dbReference type="eggNOG" id="COG0185">
    <property type="taxonomic scope" value="Bacteria"/>
</dbReference>
<dbReference type="HOGENOM" id="CLU_144911_0_1_5"/>
<dbReference type="BioCyc" id="RSPH349102:G1G8M-2608-MONOMER"/>
<dbReference type="GO" id="GO:0005737">
    <property type="term" value="C:cytoplasm"/>
    <property type="evidence" value="ECO:0007669"/>
    <property type="project" value="UniProtKB-ARBA"/>
</dbReference>
<dbReference type="GO" id="GO:0015935">
    <property type="term" value="C:small ribosomal subunit"/>
    <property type="evidence" value="ECO:0007669"/>
    <property type="project" value="InterPro"/>
</dbReference>
<dbReference type="GO" id="GO:0019843">
    <property type="term" value="F:rRNA binding"/>
    <property type="evidence" value="ECO:0007669"/>
    <property type="project" value="UniProtKB-UniRule"/>
</dbReference>
<dbReference type="GO" id="GO:0003735">
    <property type="term" value="F:structural constituent of ribosome"/>
    <property type="evidence" value="ECO:0007669"/>
    <property type="project" value="InterPro"/>
</dbReference>
<dbReference type="GO" id="GO:0000028">
    <property type="term" value="P:ribosomal small subunit assembly"/>
    <property type="evidence" value="ECO:0007669"/>
    <property type="project" value="TreeGrafter"/>
</dbReference>
<dbReference type="GO" id="GO:0006412">
    <property type="term" value="P:translation"/>
    <property type="evidence" value="ECO:0007669"/>
    <property type="project" value="UniProtKB-UniRule"/>
</dbReference>
<dbReference type="FunFam" id="3.30.860.10:FF:000001">
    <property type="entry name" value="30S ribosomal protein S19"/>
    <property type="match status" value="1"/>
</dbReference>
<dbReference type="Gene3D" id="3.30.860.10">
    <property type="entry name" value="30s Ribosomal Protein S19, Chain A"/>
    <property type="match status" value="1"/>
</dbReference>
<dbReference type="HAMAP" id="MF_00531">
    <property type="entry name" value="Ribosomal_uS19"/>
    <property type="match status" value="1"/>
</dbReference>
<dbReference type="InterPro" id="IPR002222">
    <property type="entry name" value="Ribosomal_uS19"/>
</dbReference>
<dbReference type="InterPro" id="IPR005732">
    <property type="entry name" value="Ribosomal_uS19_bac-type"/>
</dbReference>
<dbReference type="InterPro" id="IPR020934">
    <property type="entry name" value="Ribosomal_uS19_CS"/>
</dbReference>
<dbReference type="InterPro" id="IPR023575">
    <property type="entry name" value="Ribosomal_uS19_SF"/>
</dbReference>
<dbReference type="NCBIfam" id="TIGR01050">
    <property type="entry name" value="rpsS_bact"/>
    <property type="match status" value="1"/>
</dbReference>
<dbReference type="PANTHER" id="PTHR11880">
    <property type="entry name" value="RIBOSOMAL PROTEIN S19P FAMILY MEMBER"/>
    <property type="match status" value="1"/>
</dbReference>
<dbReference type="PANTHER" id="PTHR11880:SF8">
    <property type="entry name" value="SMALL RIBOSOMAL SUBUNIT PROTEIN US19M"/>
    <property type="match status" value="1"/>
</dbReference>
<dbReference type="Pfam" id="PF00203">
    <property type="entry name" value="Ribosomal_S19"/>
    <property type="match status" value="1"/>
</dbReference>
<dbReference type="PIRSF" id="PIRSF002144">
    <property type="entry name" value="Ribosomal_S19"/>
    <property type="match status" value="1"/>
</dbReference>
<dbReference type="PRINTS" id="PR00975">
    <property type="entry name" value="RIBOSOMALS19"/>
</dbReference>
<dbReference type="SUPFAM" id="SSF54570">
    <property type="entry name" value="Ribosomal protein S19"/>
    <property type="match status" value="1"/>
</dbReference>
<dbReference type="PROSITE" id="PS00323">
    <property type="entry name" value="RIBOSOMAL_S19"/>
    <property type="match status" value="1"/>
</dbReference>
<feature type="chain" id="PRO_1000051112" description="Small ribosomal subunit protein uS19">
    <location>
        <begin position="1"/>
        <end position="92"/>
    </location>
</feature>
<reference key="1">
    <citation type="submission" date="2007-04" db="EMBL/GenBank/DDBJ databases">
        <title>Complete sequence of chromosome of Rhodobacter sphaeroides ATCC 17025.</title>
        <authorList>
            <consortium name="US DOE Joint Genome Institute"/>
            <person name="Copeland A."/>
            <person name="Lucas S."/>
            <person name="Lapidus A."/>
            <person name="Barry K."/>
            <person name="Detter J.C."/>
            <person name="Glavina del Rio T."/>
            <person name="Hammon N."/>
            <person name="Israni S."/>
            <person name="Dalin E."/>
            <person name="Tice H."/>
            <person name="Pitluck S."/>
            <person name="Chertkov O."/>
            <person name="Brettin T."/>
            <person name="Bruce D."/>
            <person name="Han C."/>
            <person name="Schmutz J."/>
            <person name="Larimer F."/>
            <person name="Land M."/>
            <person name="Hauser L."/>
            <person name="Kyrpides N."/>
            <person name="Kim E."/>
            <person name="Richardson P."/>
            <person name="Mackenzie C."/>
            <person name="Choudhary M."/>
            <person name="Donohue T.J."/>
            <person name="Kaplan S."/>
        </authorList>
    </citation>
    <scope>NUCLEOTIDE SEQUENCE [LARGE SCALE GENOMIC DNA]</scope>
    <source>
        <strain>ATCC 17025 / ATH 2.4.3</strain>
    </source>
</reference>
<organism>
    <name type="scientific">Cereibacter sphaeroides (strain ATCC 17025 / ATH 2.4.3)</name>
    <name type="common">Rhodobacter sphaeroides</name>
    <dbReference type="NCBI Taxonomy" id="349102"/>
    <lineage>
        <taxon>Bacteria</taxon>
        <taxon>Pseudomonadati</taxon>
        <taxon>Pseudomonadota</taxon>
        <taxon>Alphaproteobacteria</taxon>
        <taxon>Rhodobacterales</taxon>
        <taxon>Paracoccaceae</taxon>
        <taxon>Cereibacter</taxon>
    </lineage>
</organism>
<evidence type="ECO:0000255" key="1">
    <source>
        <dbReference type="HAMAP-Rule" id="MF_00531"/>
    </source>
</evidence>
<evidence type="ECO:0000305" key="2"/>
<proteinExistence type="inferred from homology"/>
<protein>
    <recommendedName>
        <fullName evidence="1">Small ribosomal subunit protein uS19</fullName>
    </recommendedName>
    <alternativeName>
        <fullName evidence="2">30S ribosomal protein S19</fullName>
    </alternativeName>
</protein>
<keyword id="KW-0687">Ribonucleoprotein</keyword>
<keyword id="KW-0689">Ribosomal protein</keyword>
<keyword id="KW-0694">RNA-binding</keyword>
<keyword id="KW-0699">rRNA-binding</keyword>
<sequence>MARSTWKGPFVDGYLLKKAEKSRESGKNEVIKIWSRRSTILPQFVGLTFGVYNGKKHVPVNVTEEMIGQKFGEYSPTRTYYGHAADKKAKRK</sequence>
<name>RS19_CERS5</name>